<sequence length="59" mass="6590">MLDIKLLDIIACPLCKGKLSYKKNSNELICKFDHLAYPVIDGIPALLKVKARTISSDEE</sequence>
<accession>A1STC9</accession>
<gene>
    <name type="ordered locus">Ping_0902</name>
</gene>
<dbReference type="EMBL" id="CP000510">
    <property type="protein sequence ID" value="ABM02744.1"/>
    <property type="molecule type" value="Genomic_DNA"/>
</dbReference>
<dbReference type="RefSeq" id="WP_011769307.1">
    <property type="nucleotide sequence ID" value="NC_008709.1"/>
</dbReference>
<dbReference type="SMR" id="A1STC9"/>
<dbReference type="STRING" id="357804.Ping_0902"/>
<dbReference type="KEGG" id="pin:Ping_0902"/>
<dbReference type="eggNOG" id="COG2835">
    <property type="taxonomic scope" value="Bacteria"/>
</dbReference>
<dbReference type="HOGENOM" id="CLU_155659_3_1_6"/>
<dbReference type="OrthoDB" id="9812205at2"/>
<dbReference type="Proteomes" id="UP000000639">
    <property type="component" value="Chromosome"/>
</dbReference>
<dbReference type="GO" id="GO:0005829">
    <property type="term" value="C:cytosol"/>
    <property type="evidence" value="ECO:0007669"/>
    <property type="project" value="TreeGrafter"/>
</dbReference>
<dbReference type="FunFam" id="2.20.25.10:FF:000002">
    <property type="entry name" value="UPF0434 protein YcaR"/>
    <property type="match status" value="1"/>
</dbReference>
<dbReference type="Gene3D" id="2.20.25.10">
    <property type="match status" value="1"/>
</dbReference>
<dbReference type="HAMAP" id="MF_01187">
    <property type="entry name" value="UPF0434"/>
    <property type="match status" value="1"/>
</dbReference>
<dbReference type="InterPro" id="IPR005651">
    <property type="entry name" value="Trm112-like"/>
</dbReference>
<dbReference type="PANTHER" id="PTHR33505:SF4">
    <property type="entry name" value="PROTEIN PREY, MITOCHONDRIAL"/>
    <property type="match status" value="1"/>
</dbReference>
<dbReference type="PANTHER" id="PTHR33505">
    <property type="entry name" value="ZGC:162634"/>
    <property type="match status" value="1"/>
</dbReference>
<dbReference type="Pfam" id="PF03966">
    <property type="entry name" value="Trm112p"/>
    <property type="match status" value="1"/>
</dbReference>
<dbReference type="SUPFAM" id="SSF158997">
    <property type="entry name" value="Trm112p-like"/>
    <property type="match status" value="1"/>
</dbReference>
<protein>
    <recommendedName>
        <fullName evidence="1">UPF0434 protein Ping_0902</fullName>
    </recommendedName>
</protein>
<feature type="chain" id="PRO_0000291139" description="UPF0434 protein Ping_0902">
    <location>
        <begin position="1"/>
        <end position="59"/>
    </location>
</feature>
<reference key="1">
    <citation type="journal article" date="2008" name="BMC Genomics">
        <title>Genomics of an extreme psychrophile, Psychromonas ingrahamii.</title>
        <authorList>
            <person name="Riley M."/>
            <person name="Staley J.T."/>
            <person name="Danchin A."/>
            <person name="Wang T.Z."/>
            <person name="Brettin T.S."/>
            <person name="Hauser L.J."/>
            <person name="Land M.L."/>
            <person name="Thompson L.S."/>
        </authorList>
    </citation>
    <scope>NUCLEOTIDE SEQUENCE [LARGE SCALE GENOMIC DNA]</scope>
    <source>
        <strain>DSM 17664 / CCUG 51855 / 37</strain>
    </source>
</reference>
<keyword id="KW-1185">Reference proteome</keyword>
<comment type="similarity">
    <text evidence="1">Belongs to the UPF0434 family.</text>
</comment>
<name>Y902_PSYIN</name>
<organism>
    <name type="scientific">Psychromonas ingrahamii (strain DSM 17664 / CCUG 51855 / 37)</name>
    <dbReference type="NCBI Taxonomy" id="357804"/>
    <lineage>
        <taxon>Bacteria</taxon>
        <taxon>Pseudomonadati</taxon>
        <taxon>Pseudomonadota</taxon>
        <taxon>Gammaproteobacteria</taxon>
        <taxon>Alteromonadales</taxon>
        <taxon>Psychromonadaceae</taxon>
        <taxon>Psychromonas</taxon>
    </lineage>
</organism>
<proteinExistence type="inferred from homology"/>
<evidence type="ECO:0000255" key="1">
    <source>
        <dbReference type="HAMAP-Rule" id="MF_01187"/>
    </source>
</evidence>